<reference key="1">
    <citation type="journal article" date="2002" name="Proc. Natl. Acad. Sci. U.S.A.">
        <title>Complete genome sequence and comparative genomic analysis of an emerging human pathogen, serotype V Streptococcus agalactiae.</title>
        <authorList>
            <person name="Tettelin H."/>
            <person name="Masignani V."/>
            <person name="Cieslewicz M.J."/>
            <person name="Eisen J.A."/>
            <person name="Peterson S.N."/>
            <person name="Wessels M.R."/>
            <person name="Paulsen I.T."/>
            <person name="Nelson K.E."/>
            <person name="Margarit I."/>
            <person name="Read T.D."/>
            <person name="Madoff L.C."/>
            <person name="Wolf A.M."/>
            <person name="Beanan M.J."/>
            <person name="Brinkac L.M."/>
            <person name="Daugherty S.C."/>
            <person name="DeBoy R.T."/>
            <person name="Durkin A.S."/>
            <person name="Kolonay J.F."/>
            <person name="Madupu R."/>
            <person name="Lewis M.R."/>
            <person name="Radune D."/>
            <person name="Fedorova N.B."/>
            <person name="Scanlan D."/>
            <person name="Khouri H.M."/>
            <person name="Mulligan S."/>
            <person name="Carty H.A."/>
            <person name="Cline R.T."/>
            <person name="Van Aken S.E."/>
            <person name="Gill J."/>
            <person name="Scarselli M."/>
            <person name="Mora M."/>
            <person name="Iacobini E.T."/>
            <person name="Brettoni C."/>
            <person name="Galli G."/>
            <person name="Mariani M."/>
            <person name="Vegni F."/>
            <person name="Maione D."/>
            <person name="Rinaudo D."/>
            <person name="Rappuoli R."/>
            <person name="Telford J.L."/>
            <person name="Kasper D.L."/>
            <person name="Grandi G."/>
            <person name="Fraser C.M."/>
        </authorList>
    </citation>
    <scope>NUCLEOTIDE SEQUENCE [LARGE SCALE GENOMIC DNA]</scope>
    <source>
        <strain>ATCC BAA-611 / 2603 V/R</strain>
    </source>
</reference>
<proteinExistence type="inferred from homology"/>
<accession>Q8E1A3</accession>
<organism>
    <name type="scientific">Streptococcus agalactiae serotype V (strain ATCC BAA-611 / 2603 V/R)</name>
    <dbReference type="NCBI Taxonomy" id="208435"/>
    <lineage>
        <taxon>Bacteria</taxon>
        <taxon>Bacillati</taxon>
        <taxon>Bacillota</taxon>
        <taxon>Bacilli</taxon>
        <taxon>Lactobacillales</taxon>
        <taxon>Streptococcaceae</taxon>
        <taxon>Streptococcus</taxon>
    </lineage>
</organism>
<sequence length="368" mass="41937">MPKKTDTPAYKPSIYSLTRDELIAWAIEHGEKKFRASQIWDWLYKKRVQSFDEMTNISKDFIALLNENFVVNPLKQRIVQESADGTVKYLFELPDGMLIETVLMRQHYGLSVCVTTQVGCNIGCTFCASGLIKKQRDLNNGEITAQIMLVQKYFDERGQGERVSHIVVMGIGEPFDNYTNVLKFLRTVNDDNGLAIGARHITVSTSGLAHKIREFANEGVQVNLAVSLHAPNNDLRSSIMRINRSFPLEKLFAAIEYYIETTNRRVTFEYIMLNGVNDTPENAQELADLTKKIRKLSYVNLIPYNPVSEHDQYSRSPKERVEAFYDVLKKNGVNCVVRQEHGTDIDAACGQLRSNTMKRDRQKAKVGQ</sequence>
<keyword id="KW-0004">4Fe-4S</keyword>
<keyword id="KW-0963">Cytoplasm</keyword>
<keyword id="KW-1015">Disulfide bond</keyword>
<keyword id="KW-0408">Iron</keyword>
<keyword id="KW-0411">Iron-sulfur</keyword>
<keyword id="KW-0479">Metal-binding</keyword>
<keyword id="KW-0489">Methyltransferase</keyword>
<keyword id="KW-1185">Reference proteome</keyword>
<keyword id="KW-0698">rRNA processing</keyword>
<keyword id="KW-0949">S-adenosyl-L-methionine</keyword>
<keyword id="KW-0808">Transferase</keyword>
<keyword id="KW-0819">tRNA processing</keyword>
<evidence type="ECO:0000255" key="1">
    <source>
        <dbReference type="HAMAP-Rule" id="MF_01849"/>
    </source>
</evidence>
<evidence type="ECO:0000255" key="2">
    <source>
        <dbReference type="PROSITE-ProRule" id="PRU01266"/>
    </source>
</evidence>
<feature type="chain" id="PRO_0000350450" description="Probable dual-specificity RNA methyltransferase RlmN">
    <location>
        <begin position="1"/>
        <end position="368"/>
    </location>
</feature>
<feature type="domain" description="Radical SAM core" evidence="2">
    <location>
        <begin position="106"/>
        <end position="344"/>
    </location>
</feature>
<feature type="active site" description="Proton acceptor" evidence="1">
    <location>
        <position position="100"/>
    </location>
</feature>
<feature type="active site" description="S-methylcysteine intermediate" evidence="1">
    <location>
        <position position="349"/>
    </location>
</feature>
<feature type="binding site" evidence="1">
    <location>
        <position position="120"/>
    </location>
    <ligand>
        <name>[4Fe-4S] cluster</name>
        <dbReference type="ChEBI" id="CHEBI:49883"/>
        <note>4Fe-4S-S-AdoMet</note>
    </ligand>
</feature>
<feature type="binding site" evidence="1">
    <location>
        <position position="124"/>
    </location>
    <ligand>
        <name>[4Fe-4S] cluster</name>
        <dbReference type="ChEBI" id="CHEBI:49883"/>
        <note>4Fe-4S-S-AdoMet</note>
    </ligand>
</feature>
<feature type="binding site" evidence="1">
    <location>
        <position position="127"/>
    </location>
    <ligand>
        <name>[4Fe-4S] cluster</name>
        <dbReference type="ChEBI" id="CHEBI:49883"/>
        <note>4Fe-4S-S-AdoMet</note>
    </ligand>
</feature>
<feature type="binding site" evidence="1">
    <location>
        <begin position="172"/>
        <end position="173"/>
    </location>
    <ligand>
        <name>S-adenosyl-L-methionine</name>
        <dbReference type="ChEBI" id="CHEBI:59789"/>
    </ligand>
</feature>
<feature type="binding site" evidence="1">
    <location>
        <position position="204"/>
    </location>
    <ligand>
        <name>S-adenosyl-L-methionine</name>
        <dbReference type="ChEBI" id="CHEBI:59789"/>
    </ligand>
</feature>
<feature type="binding site" evidence="1">
    <location>
        <begin position="227"/>
        <end position="229"/>
    </location>
    <ligand>
        <name>S-adenosyl-L-methionine</name>
        <dbReference type="ChEBI" id="CHEBI:59789"/>
    </ligand>
</feature>
<feature type="binding site" evidence="1">
    <location>
        <position position="305"/>
    </location>
    <ligand>
        <name>S-adenosyl-L-methionine</name>
        <dbReference type="ChEBI" id="CHEBI:59789"/>
    </ligand>
</feature>
<feature type="disulfide bond" description="(transient)" evidence="1">
    <location>
        <begin position="113"/>
        <end position="349"/>
    </location>
</feature>
<protein>
    <recommendedName>
        <fullName evidence="1">Probable dual-specificity RNA methyltransferase RlmN</fullName>
        <ecNumber evidence="1">2.1.1.192</ecNumber>
    </recommendedName>
    <alternativeName>
        <fullName evidence="1">23S rRNA (adenine(2503)-C(2))-methyltransferase</fullName>
    </alternativeName>
    <alternativeName>
        <fullName evidence="1">23S rRNA m2A2503 methyltransferase</fullName>
    </alternativeName>
    <alternativeName>
        <fullName evidence="1">Ribosomal RNA large subunit methyltransferase N</fullName>
    </alternativeName>
    <alternativeName>
        <fullName evidence="1">tRNA (adenine(37)-C(2))-methyltransferase</fullName>
    </alternativeName>
    <alternativeName>
        <fullName evidence="1">tRNA m2A37 methyltransferase</fullName>
    </alternativeName>
</protein>
<comment type="function">
    <text evidence="1">Specifically methylates position 2 of adenine 2503 in 23S rRNA and position 2 of adenine 37 in tRNAs.</text>
</comment>
<comment type="catalytic activity">
    <reaction evidence="1">
        <text>adenosine(2503) in 23S rRNA + 2 reduced [2Fe-2S]-[ferredoxin] + 2 S-adenosyl-L-methionine = 2-methyladenosine(2503) in 23S rRNA + 5'-deoxyadenosine + L-methionine + 2 oxidized [2Fe-2S]-[ferredoxin] + S-adenosyl-L-homocysteine</text>
        <dbReference type="Rhea" id="RHEA:42916"/>
        <dbReference type="Rhea" id="RHEA-COMP:10000"/>
        <dbReference type="Rhea" id="RHEA-COMP:10001"/>
        <dbReference type="Rhea" id="RHEA-COMP:10152"/>
        <dbReference type="Rhea" id="RHEA-COMP:10282"/>
        <dbReference type="ChEBI" id="CHEBI:17319"/>
        <dbReference type="ChEBI" id="CHEBI:33737"/>
        <dbReference type="ChEBI" id="CHEBI:33738"/>
        <dbReference type="ChEBI" id="CHEBI:57844"/>
        <dbReference type="ChEBI" id="CHEBI:57856"/>
        <dbReference type="ChEBI" id="CHEBI:59789"/>
        <dbReference type="ChEBI" id="CHEBI:74411"/>
        <dbReference type="ChEBI" id="CHEBI:74497"/>
        <dbReference type="EC" id="2.1.1.192"/>
    </reaction>
</comment>
<comment type="catalytic activity">
    <reaction evidence="1">
        <text>adenosine(37) in tRNA + 2 reduced [2Fe-2S]-[ferredoxin] + 2 S-adenosyl-L-methionine = 2-methyladenosine(37) in tRNA + 5'-deoxyadenosine + L-methionine + 2 oxidized [2Fe-2S]-[ferredoxin] + S-adenosyl-L-homocysteine</text>
        <dbReference type="Rhea" id="RHEA:43332"/>
        <dbReference type="Rhea" id="RHEA-COMP:10000"/>
        <dbReference type="Rhea" id="RHEA-COMP:10001"/>
        <dbReference type="Rhea" id="RHEA-COMP:10162"/>
        <dbReference type="Rhea" id="RHEA-COMP:10485"/>
        <dbReference type="ChEBI" id="CHEBI:17319"/>
        <dbReference type="ChEBI" id="CHEBI:33737"/>
        <dbReference type="ChEBI" id="CHEBI:33738"/>
        <dbReference type="ChEBI" id="CHEBI:57844"/>
        <dbReference type="ChEBI" id="CHEBI:57856"/>
        <dbReference type="ChEBI" id="CHEBI:59789"/>
        <dbReference type="ChEBI" id="CHEBI:74411"/>
        <dbReference type="ChEBI" id="CHEBI:74497"/>
        <dbReference type="EC" id="2.1.1.192"/>
    </reaction>
</comment>
<comment type="cofactor">
    <cofactor evidence="1">
        <name>[4Fe-4S] cluster</name>
        <dbReference type="ChEBI" id="CHEBI:49883"/>
    </cofactor>
    <text evidence="1">Binds 1 [4Fe-4S] cluster. The cluster is coordinated with 3 cysteines and an exchangeable S-adenosyl-L-methionine.</text>
</comment>
<comment type="subcellular location">
    <subcellularLocation>
        <location evidence="1">Cytoplasm</location>
    </subcellularLocation>
</comment>
<comment type="miscellaneous">
    <text evidence="1">Reaction proceeds by a ping-pong mechanism involving intermediate methylation of a conserved cysteine residue.</text>
</comment>
<comment type="similarity">
    <text evidence="1">Belongs to the radical SAM superfamily. RlmN family.</text>
</comment>
<dbReference type="EC" id="2.1.1.192" evidence="1"/>
<dbReference type="EMBL" id="AE009948">
    <property type="protein sequence ID" value="AAM99360.1"/>
    <property type="molecule type" value="Genomic_DNA"/>
</dbReference>
<dbReference type="RefSeq" id="NP_687488.1">
    <property type="nucleotide sequence ID" value="NC_004116.1"/>
</dbReference>
<dbReference type="RefSeq" id="WP_001124990.1">
    <property type="nucleotide sequence ID" value="NC_004116.1"/>
</dbReference>
<dbReference type="SMR" id="Q8E1A3"/>
<dbReference type="STRING" id="208435.SAG0458"/>
<dbReference type="KEGG" id="sag:SAG0458"/>
<dbReference type="PATRIC" id="fig|208435.3.peg.456"/>
<dbReference type="HOGENOM" id="CLU_029101_0_1_9"/>
<dbReference type="OrthoDB" id="9793973at2"/>
<dbReference type="Proteomes" id="UP000000821">
    <property type="component" value="Chromosome"/>
</dbReference>
<dbReference type="GO" id="GO:0005737">
    <property type="term" value="C:cytoplasm"/>
    <property type="evidence" value="ECO:0007669"/>
    <property type="project" value="UniProtKB-SubCell"/>
</dbReference>
<dbReference type="GO" id="GO:0051539">
    <property type="term" value="F:4 iron, 4 sulfur cluster binding"/>
    <property type="evidence" value="ECO:0007669"/>
    <property type="project" value="UniProtKB-UniRule"/>
</dbReference>
<dbReference type="GO" id="GO:0046872">
    <property type="term" value="F:metal ion binding"/>
    <property type="evidence" value="ECO:0007669"/>
    <property type="project" value="UniProtKB-KW"/>
</dbReference>
<dbReference type="GO" id="GO:0070040">
    <property type="term" value="F:rRNA (adenine(2503)-C2-)-methyltransferase activity"/>
    <property type="evidence" value="ECO:0007669"/>
    <property type="project" value="UniProtKB-UniRule"/>
</dbReference>
<dbReference type="GO" id="GO:0019843">
    <property type="term" value="F:rRNA binding"/>
    <property type="evidence" value="ECO:0007669"/>
    <property type="project" value="UniProtKB-UniRule"/>
</dbReference>
<dbReference type="GO" id="GO:0002935">
    <property type="term" value="F:tRNA (adenine(37)-C2)-methyltransferase activity"/>
    <property type="evidence" value="ECO:0007669"/>
    <property type="project" value="UniProtKB-UniRule"/>
</dbReference>
<dbReference type="GO" id="GO:0000049">
    <property type="term" value="F:tRNA binding"/>
    <property type="evidence" value="ECO:0007669"/>
    <property type="project" value="UniProtKB-UniRule"/>
</dbReference>
<dbReference type="GO" id="GO:0070475">
    <property type="term" value="P:rRNA base methylation"/>
    <property type="evidence" value="ECO:0007669"/>
    <property type="project" value="UniProtKB-UniRule"/>
</dbReference>
<dbReference type="GO" id="GO:0030488">
    <property type="term" value="P:tRNA methylation"/>
    <property type="evidence" value="ECO:0007669"/>
    <property type="project" value="UniProtKB-UniRule"/>
</dbReference>
<dbReference type="CDD" id="cd01335">
    <property type="entry name" value="Radical_SAM"/>
    <property type="match status" value="1"/>
</dbReference>
<dbReference type="FunFam" id="3.20.20.70:FF:000014">
    <property type="entry name" value="Probable dual-specificity RNA methyltransferase RlmN"/>
    <property type="match status" value="1"/>
</dbReference>
<dbReference type="Gene3D" id="1.10.150.530">
    <property type="match status" value="1"/>
</dbReference>
<dbReference type="Gene3D" id="3.20.20.70">
    <property type="entry name" value="Aldolase class I"/>
    <property type="match status" value="1"/>
</dbReference>
<dbReference type="HAMAP" id="MF_01849">
    <property type="entry name" value="RNA_methyltr_RlmN"/>
    <property type="match status" value="1"/>
</dbReference>
<dbReference type="InterPro" id="IPR013785">
    <property type="entry name" value="Aldolase_TIM"/>
</dbReference>
<dbReference type="InterPro" id="IPR040072">
    <property type="entry name" value="Methyltransferase_A"/>
</dbReference>
<dbReference type="InterPro" id="IPR048641">
    <property type="entry name" value="RlmN_N"/>
</dbReference>
<dbReference type="InterPro" id="IPR027492">
    <property type="entry name" value="RNA_MTrfase_RlmN"/>
</dbReference>
<dbReference type="InterPro" id="IPR004383">
    <property type="entry name" value="rRNA_lsu_MTrfase_RlmN/Cfr"/>
</dbReference>
<dbReference type="InterPro" id="IPR007197">
    <property type="entry name" value="rSAM"/>
</dbReference>
<dbReference type="NCBIfam" id="TIGR00048">
    <property type="entry name" value="rRNA_mod_RlmN"/>
    <property type="match status" value="1"/>
</dbReference>
<dbReference type="PANTHER" id="PTHR30544">
    <property type="entry name" value="23S RRNA METHYLTRANSFERASE"/>
    <property type="match status" value="1"/>
</dbReference>
<dbReference type="PANTHER" id="PTHR30544:SF5">
    <property type="entry name" value="RADICAL SAM CORE DOMAIN-CONTAINING PROTEIN"/>
    <property type="match status" value="1"/>
</dbReference>
<dbReference type="Pfam" id="PF04055">
    <property type="entry name" value="Radical_SAM"/>
    <property type="match status" value="1"/>
</dbReference>
<dbReference type="Pfam" id="PF21016">
    <property type="entry name" value="RlmN_N"/>
    <property type="match status" value="1"/>
</dbReference>
<dbReference type="PIRSF" id="PIRSF006004">
    <property type="entry name" value="CHP00048"/>
    <property type="match status" value="1"/>
</dbReference>
<dbReference type="SFLD" id="SFLDF00275">
    <property type="entry name" value="adenosine_C2_methyltransferase"/>
    <property type="match status" value="1"/>
</dbReference>
<dbReference type="SFLD" id="SFLDS00029">
    <property type="entry name" value="Radical_SAM"/>
    <property type="match status" value="1"/>
</dbReference>
<dbReference type="SUPFAM" id="SSF102114">
    <property type="entry name" value="Radical SAM enzymes"/>
    <property type="match status" value="1"/>
</dbReference>
<dbReference type="PROSITE" id="PS51918">
    <property type="entry name" value="RADICAL_SAM"/>
    <property type="match status" value="1"/>
</dbReference>
<gene>
    <name evidence="1" type="primary">rlmN</name>
    <name type="ordered locus">SAG0458</name>
</gene>
<name>RLMN_STRA5</name>